<feature type="chain" id="PRO_0000119974" description="F-box protein pof7">
    <location>
        <begin position="1"/>
        <end position="361"/>
    </location>
</feature>
<feature type="domain" description="F-box">
    <location>
        <begin position="105"/>
        <end position="157"/>
    </location>
</feature>
<dbReference type="EMBL" id="CU329672">
    <property type="protein sequence ID" value="CAA19361.2"/>
    <property type="molecule type" value="Genomic_DNA"/>
</dbReference>
<dbReference type="EMBL" id="AB062776">
    <property type="protein sequence ID" value="BAB60687.1"/>
    <property type="molecule type" value="Genomic_DNA"/>
</dbReference>
<dbReference type="PIR" id="T41557">
    <property type="entry name" value="T41557"/>
</dbReference>
<dbReference type="RefSeq" id="NP_588546.2">
    <property type="nucleotide sequence ID" value="NM_001023533.2"/>
</dbReference>
<dbReference type="SMR" id="O74531"/>
<dbReference type="BioGRID" id="275714">
    <property type="interactions" value="21"/>
</dbReference>
<dbReference type="FunCoup" id="O74531">
    <property type="interactions" value="75"/>
</dbReference>
<dbReference type="IntAct" id="O74531">
    <property type="interactions" value="1"/>
</dbReference>
<dbReference type="MINT" id="O74531"/>
<dbReference type="STRING" id="284812.O74531"/>
<dbReference type="iPTMnet" id="O74531"/>
<dbReference type="PaxDb" id="4896-SPCC1827.08c.1"/>
<dbReference type="EnsemblFungi" id="SPCC1827.08c.1">
    <property type="protein sequence ID" value="SPCC1827.08c.1:pep"/>
    <property type="gene ID" value="SPCC1827.08c"/>
</dbReference>
<dbReference type="GeneID" id="2539142"/>
<dbReference type="KEGG" id="spo:2539142"/>
<dbReference type="PomBase" id="SPCC1827.08c">
    <property type="gene designation" value="pof7"/>
</dbReference>
<dbReference type="VEuPathDB" id="FungiDB:SPCC1827.08c"/>
<dbReference type="eggNOG" id="KOG2997">
    <property type="taxonomic scope" value="Eukaryota"/>
</dbReference>
<dbReference type="HOGENOM" id="CLU_017706_1_0_1"/>
<dbReference type="InParanoid" id="O74531"/>
<dbReference type="OMA" id="RWNRLDF"/>
<dbReference type="PhylomeDB" id="O74531"/>
<dbReference type="Reactome" id="R-SPO-8951664">
    <property type="pathway name" value="Neddylation"/>
</dbReference>
<dbReference type="Reactome" id="R-SPO-983168">
    <property type="pathway name" value="Antigen processing: Ubiquitination &amp; Proteasome degradation"/>
</dbReference>
<dbReference type="PRO" id="PR:O74531"/>
<dbReference type="Proteomes" id="UP000002485">
    <property type="component" value="Chromosome III"/>
</dbReference>
<dbReference type="GO" id="GO:0005737">
    <property type="term" value="C:cytoplasm"/>
    <property type="evidence" value="ECO:0007005"/>
    <property type="project" value="PomBase"/>
</dbReference>
<dbReference type="GO" id="GO:0005829">
    <property type="term" value="C:cytosol"/>
    <property type="evidence" value="ECO:0007005"/>
    <property type="project" value="PomBase"/>
</dbReference>
<dbReference type="GO" id="GO:0019005">
    <property type="term" value="C:SCF ubiquitin ligase complex"/>
    <property type="evidence" value="ECO:0000318"/>
    <property type="project" value="GO_Central"/>
</dbReference>
<dbReference type="GO" id="GO:1990756">
    <property type="term" value="F:ubiquitin-like ligase-substrate adaptor activity"/>
    <property type="evidence" value="ECO:0000255"/>
    <property type="project" value="PomBase"/>
</dbReference>
<dbReference type="GO" id="GO:0031146">
    <property type="term" value="P:SCF-dependent proteasomal ubiquitin-dependent protein catabolic process"/>
    <property type="evidence" value="ECO:0000318"/>
    <property type="project" value="GO_Central"/>
</dbReference>
<dbReference type="Gene3D" id="1.20.1280.50">
    <property type="match status" value="1"/>
</dbReference>
<dbReference type="InterPro" id="IPR036047">
    <property type="entry name" value="F-box-like_dom_sf"/>
</dbReference>
<dbReference type="InterPro" id="IPR001810">
    <property type="entry name" value="F-box_dom"/>
</dbReference>
<dbReference type="InterPro" id="IPR045464">
    <property type="entry name" value="Hrt3/FBXO9_C"/>
</dbReference>
<dbReference type="PANTHER" id="PTHR12874:SF9">
    <property type="entry name" value="F-BOX ONLY PROTEIN 48"/>
    <property type="match status" value="1"/>
</dbReference>
<dbReference type="PANTHER" id="PTHR12874">
    <property type="entry name" value="F-BOX ONLY PROTEIN 48-RELATED"/>
    <property type="match status" value="1"/>
</dbReference>
<dbReference type="Pfam" id="PF12937">
    <property type="entry name" value="F-box-like"/>
    <property type="match status" value="1"/>
</dbReference>
<dbReference type="Pfam" id="PF19270">
    <property type="entry name" value="FBO_C"/>
    <property type="match status" value="1"/>
</dbReference>
<dbReference type="SUPFAM" id="SSF81383">
    <property type="entry name" value="F-box domain"/>
    <property type="match status" value="1"/>
</dbReference>
<organism>
    <name type="scientific">Schizosaccharomyces pombe (strain 972 / ATCC 24843)</name>
    <name type="common">Fission yeast</name>
    <dbReference type="NCBI Taxonomy" id="284812"/>
    <lineage>
        <taxon>Eukaryota</taxon>
        <taxon>Fungi</taxon>
        <taxon>Dikarya</taxon>
        <taxon>Ascomycota</taxon>
        <taxon>Taphrinomycotina</taxon>
        <taxon>Schizosaccharomycetes</taxon>
        <taxon>Schizosaccharomycetales</taxon>
        <taxon>Schizosaccharomycetaceae</taxon>
        <taxon>Schizosaccharomyces</taxon>
    </lineage>
</organism>
<keyword id="KW-0963">Cytoplasm</keyword>
<keyword id="KW-1185">Reference proteome</keyword>
<keyword id="KW-0833">Ubl conjugation pathway</keyword>
<gene>
    <name type="primary">pof7</name>
    <name type="ORF">SPCC1827.08c</name>
    <name type="ORF">SPCC70.11c</name>
</gene>
<comment type="subunit">
    <text evidence="1">Interacts with skp1.</text>
</comment>
<comment type="interaction">
    <interactant intactId="EBI-1185549">
        <id>O74531</id>
    </interactant>
    <interactant intactId="EBI-1172248">
        <id>Q9Y709</id>
        <label>skp1</label>
    </interactant>
    <organismsDiffer>false</organismsDiffer>
    <experiments>2</experiments>
</comment>
<comment type="subcellular location">
    <subcellularLocation>
        <location evidence="2">Cytoplasm</location>
    </subcellularLocation>
</comment>
<name>POF7_SCHPO</name>
<sequence>MSTVEDQLSLELETVNKDILLKKALLHYKDAIKSEREGNLGESLNKYRLAHKVHEDVESIYRRLERLQLCKRNEEEEMLNSDASEAMLTVSSVPSPTLTENESVNESVVPNILKLPDEVLLVILENCIRDLHDLRYLSSIALTCKHFAKALRADSLYRSFCYCSCEQKEWQQSIKSIEEELVEKYQQSWKTLFLKKPRSRFDGCYISVCRYFRPGTSDTSWNQPIHLITYYRYLRLYPNSTCIVYQSSNEPNDVVRNFSVQNTSLFSPMSSSPMFSNGNVALTGSWSMTPSGEMLIVYPASQTYTYVQKLQVRGIRLKWISFYSIHNYTSFTNEMPLTHNRDYVFSRVYSYTADSESLKRG</sequence>
<proteinExistence type="evidence at protein level"/>
<accession>O74531</accession>
<accession>Q9USL9</accession>
<protein>
    <recommendedName>
        <fullName>F-box protein pof7</fullName>
    </recommendedName>
</protein>
<evidence type="ECO:0000269" key="1">
    <source>
    </source>
</evidence>
<evidence type="ECO:0000269" key="2">
    <source>
    </source>
</evidence>
<reference key="1">
    <citation type="journal article" date="2002" name="Nature">
        <title>The genome sequence of Schizosaccharomyces pombe.</title>
        <authorList>
            <person name="Wood V."/>
            <person name="Gwilliam R."/>
            <person name="Rajandream M.A."/>
            <person name="Lyne M.H."/>
            <person name="Lyne R."/>
            <person name="Stewart A."/>
            <person name="Sgouros J.G."/>
            <person name="Peat N."/>
            <person name="Hayles J."/>
            <person name="Baker S.G."/>
            <person name="Basham D."/>
            <person name="Bowman S."/>
            <person name="Brooks K."/>
            <person name="Brown D."/>
            <person name="Brown S."/>
            <person name="Chillingworth T."/>
            <person name="Churcher C.M."/>
            <person name="Collins M."/>
            <person name="Connor R."/>
            <person name="Cronin A."/>
            <person name="Davis P."/>
            <person name="Feltwell T."/>
            <person name="Fraser A."/>
            <person name="Gentles S."/>
            <person name="Goble A."/>
            <person name="Hamlin N."/>
            <person name="Harris D.E."/>
            <person name="Hidalgo J."/>
            <person name="Hodgson G."/>
            <person name="Holroyd S."/>
            <person name="Hornsby T."/>
            <person name="Howarth S."/>
            <person name="Huckle E.J."/>
            <person name="Hunt S."/>
            <person name="Jagels K."/>
            <person name="James K.D."/>
            <person name="Jones L."/>
            <person name="Jones M."/>
            <person name="Leather S."/>
            <person name="McDonald S."/>
            <person name="McLean J."/>
            <person name="Mooney P."/>
            <person name="Moule S."/>
            <person name="Mungall K.L."/>
            <person name="Murphy L.D."/>
            <person name="Niblett D."/>
            <person name="Odell C."/>
            <person name="Oliver K."/>
            <person name="O'Neil S."/>
            <person name="Pearson D."/>
            <person name="Quail M.A."/>
            <person name="Rabbinowitsch E."/>
            <person name="Rutherford K.M."/>
            <person name="Rutter S."/>
            <person name="Saunders D."/>
            <person name="Seeger K."/>
            <person name="Sharp S."/>
            <person name="Skelton J."/>
            <person name="Simmonds M.N."/>
            <person name="Squares R."/>
            <person name="Squares S."/>
            <person name="Stevens K."/>
            <person name="Taylor K."/>
            <person name="Taylor R.G."/>
            <person name="Tivey A."/>
            <person name="Walsh S.V."/>
            <person name="Warren T."/>
            <person name="Whitehead S."/>
            <person name="Woodward J.R."/>
            <person name="Volckaert G."/>
            <person name="Aert R."/>
            <person name="Robben J."/>
            <person name="Grymonprez B."/>
            <person name="Weltjens I."/>
            <person name="Vanstreels E."/>
            <person name="Rieger M."/>
            <person name="Schaefer M."/>
            <person name="Mueller-Auer S."/>
            <person name="Gabel C."/>
            <person name="Fuchs M."/>
            <person name="Duesterhoeft A."/>
            <person name="Fritzc C."/>
            <person name="Holzer E."/>
            <person name="Moestl D."/>
            <person name="Hilbert H."/>
            <person name="Borzym K."/>
            <person name="Langer I."/>
            <person name="Beck A."/>
            <person name="Lehrach H."/>
            <person name="Reinhardt R."/>
            <person name="Pohl T.M."/>
            <person name="Eger P."/>
            <person name="Zimmermann W."/>
            <person name="Wedler H."/>
            <person name="Wambutt R."/>
            <person name="Purnelle B."/>
            <person name="Goffeau A."/>
            <person name="Cadieu E."/>
            <person name="Dreano S."/>
            <person name="Gloux S."/>
            <person name="Lelaure V."/>
            <person name="Mottier S."/>
            <person name="Galibert F."/>
            <person name="Aves S.J."/>
            <person name="Xiang Z."/>
            <person name="Hunt C."/>
            <person name="Moore K."/>
            <person name="Hurst S.M."/>
            <person name="Lucas M."/>
            <person name="Rochet M."/>
            <person name="Gaillardin C."/>
            <person name="Tallada V.A."/>
            <person name="Garzon A."/>
            <person name="Thode G."/>
            <person name="Daga R.R."/>
            <person name="Cruzado L."/>
            <person name="Jimenez J."/>
            <person name="Sanchez M."/>
            <person name="del Rey F."/>
            <person name="Benito J."/>
            <person name="Dominguez A."/>
            <person name="Revuelta J.L."/>
            <person name="Moreno S."/>
            <person name="Armstrong J."/>
            <person name="Forsburg S.L."/>
            <person name="Cerutti L."/>
            <person name="Lowe T."/>
            <person name="McCombie W.R."/>
            <person name="Paulsen I."/>
            <person name="Potashkin J."/>
            <person name="Shpakovski G.V."/>
            <person name="Ussery D."/>
            <person name="Barrell B.G."/>
            <person name="Nurse P."/>
        </authorList>
    </citation>
    <scope>NUCLEOTIDE SEQUENCE [LARGE SCALE GENOMIC DNA]</scope>
    <source>
        <strain>972 / ATCC 24843</strain>
    </source>
</reference>
<reference key="2">
    <citation type="submission" date="2001-06" db="EMBL/GenBank/DDBJ databases">
        <title>Systematic genome-wide analysis of F-box protein-encoding genes in fission yeast.</title>
        <authorList>
            <person name="Harrison C.L."/>
            <person name="Toda T."/>
        </authorList>
    </citation>
    <scope>NUCLEOTIDE SEQUENCE [GENOMIC DNA] OF 6-361</scope>
</reference>
<reference key="3">
    <citation type="journal article" date="2004" name="Genes Cells">
        <title>Molecular interactions of fission yeast Skp1 and its role in the DNA damage checkpoint.</title>
        <authorList>
            <person name="Lehmann A."/>
            <person name="Katayama S."/>
            <person name="Harrison C."/>
            <person name="Dhut S."/>
            <person name="Kitamura K."/>
            <person name="McDonald N."/>
            <person name="Toda T."/>
        </authorList>
    </citation>
    <scope>INTERACTION WITH SKP1</scope>
</reference>
<reference key="4">
    <citation type="journal article" date="2006" name="Nat. Biotechnol.">
        <title>ORFeome cloning and global analysis of protein localization in the fission yeast Schizosaccharomyces pombe.</title>
        <authorList>
            <person name="Matsuyama A."/>
            <person name="Arai R."/>
            <person name="Yashiroda Y."/>
            <person name="Shirai A."/>
            <person name="Kamata A."/>
            <person name="Sekido S."/>
            <person name="Kobayashi Y."/>
            <person name="Hashimoto A."/>
            <person name="Hamamoto M."/>
            <person name="Hiraoka Y."/>
            <person name="Horinouchi S."/>
            <person name="Yoshida M."/>
        </authorList>
    </citation>
    <scope>SUBCELLULAR LOCATION [LARGE SCALE ANALYSIS]</scope>
</reference>